<gene>
    <name evidence="1" type="primary">rhaT</name>
    <name type="ordered locus">ESA_03844</name>
</gene>
<reference key="1">
    <citation type="journal article" date="2010" name="PLoS ONE">
        <title>Genome sequence of Cronobacter sakazakii BAA-894 and comparative genomic hybridization analysis with other Cronobacter species.</title>
        <authorList>
            <person name="Kucerova E."/>
            <person name="Clifton S.W."/>
            <person name="Xia X.Q."/>
            <person name="Long F."/>
            <person name="Porwollik S."/>
            <person name="Fulton L."/>
            <person name="Fronick C."/>
            <person name="Minx P."/>
            <person name="Kyung K."/>
            <person name="Warren W."/>
            <person name="Fulton R."/>
            <person name="Feng D."/>
            <person name="Wollam A."/>
            <person name="Shah N."/>
            <person name="Bhonagiri V."/>
            <person name="Nash W.E."/>
            <person name="Hallsworth-Pepin K."/>
            <person name="Wilson R.K."/>
            <person name="McClelland M."/>
            <person name="Forsythe S.J."/>
        </authorList>
    </citation>
    <scope>NUCLEOTIDE SEQUENCE [LARGE SCALE GENOMIC DNA]</scope>
    <source>
        <strain>ATCC BAA-894</strain>
    </source>
</reference>
<keyword id="KW-0997">Cell inner membrane</keyword>
<keyword id="KW-1003">Cell membrane</keyword>
<keyword id="KW-0472">Membrane</keyword>
<keyword id="KW-1185">Reference proteome</keyword>
<keyword id="KW-0762">Sugar transport</keyword>
<keyword id="KW-0769">Symport</keyword>
<keyword id="KW-0812">Transmembrane</keyword>
<keyword id="KW-1133">Transmembrane helix</keyword>
<keyword id="KW-0813">Transport</keyword>
<evidence type="ECO:0000255" key="1">
    <source>
        <dbReference type="HAMAP-Rule" id="MF_01532"/>
    </source>
</evidence>
<organism>
    <name type="scientific">Cronobacter sakazakii (strain ATCC BAA-894)</name>
    <name type="common">Enterobacter sakazakii</name>
    <dbReference type="NCBI Taxonomy" id="290339"/>
    <lineage>
        <taxon>Bacteria</taxon>
        <taxon>Pseudomonadati</taxon>
        <taxon>Pseudomonadota</taxon>
        <taxon>Gammaproteobacteria</taxon>
        <taxon>Enterobacterales</taxon>
        <taxon>Enterobacteriaceae</taxon>
        <taxon>Cronobacter</taxon>
    </lineage>
</organism>
<proteinExistence type="inferred from homology"/>
<sequence>MSNAITMGILWHLIGAASAACFYAPFKKVRHWSWETMWSVGGVVSWLILPWVVSALLLPDFWAYYRSFSAATLLPVFLFGAMWGIGNINYGLTMRYLGMSMGIGIAIGITLIVGTLMTPLLNGKFGVLVGTAGGRMTLLGVFVALVGVAIVTRAGQLKERQMGIKAEEFNLKKGLVLAVLCGVFSAGMSFAMDAAKPMHEAAAALGVDPLYVALPSYVVIMGGGALINLGFCFIRLAKVKNLSIKADFSLAKPLLISNVLLSALGGLMWYLQFFFYAWGHARIPAQYDYISWMLHMSFYVLCGGIVGLLLREWKTAGRRPVSVLSLGCVVIIVAANIVGLGMATN</sequence>
<accession>A7ML63</accession>
<feature type="chain" id="PRO_0000316893" description="L-rhamnose-proton symporter">
    <location>
        <begin position="1"/>
        <end position="345"/>
    </location>
</feature>
<feature type="transmembrane region" description="Helical" evidence="1">
    <location>
        <begin position="4"/>
        <end position="24"/>
    </location>
</feature>
<feature type="transmembrane region" description="Helical" evidence="1">
    <location>
        <begin position="38"/>
        <end position="58"/>
    </location>
</feature>
<feature type="transmembrane region" description="Helical" evidence="1">
    <location>
        <begin position="68"/>
        <end position="88"/>
    </location>
</feature>
<feature type="transmembrane region" description="Helical" evidence="1">
    <location>
        <begin position="101"/>
        <end position="121"/>
    </location>
</feature>
<feature type="transmembrane region" description="Helical" evidence="1">
    <location>
        <begin position="131"/>
        <end position="151"/>
    </location>
</feature>
<feature type="transmembrane region" description="Helical" evidence="1">
    <location>
        <begin position="175"/>
        <end position="195"/>
    </location>
</feature>
<feature type="transmembrane region" description="Helical" evidence="1">
    <location>
        <begin position="214"/>
        <end position="234"/>
    </location>
</feature>
<feature type="transmembrane region" description="Helical" evidence="1">
    <location>
        <begin position="259"/>
        <end position="279"/>
    </location>
</feature>
<feature type="transmembrane region" description="Helical" evidence="1">
    <location>
        <begin position="290"/>
        <end position="310"/>
    </location>
</feature>
<feature type="transmembrane region" description="Helical" evidence="1">
    <location>
        <begin position="323"/>
        <end position="343"/>
    </location>
</feature>
<comment type="function">
    <text evidence="1">Uptake of L-rhamnose across the cytoplasmic membrane with the concomitant transport of protons into the cell (symport system).</text>
</comment>
<comment type="catalytic activity">
    <reaction evidence="1">
        <text>L-rhamnopyranose(in) + H(+)(in) = L-rhamnopyranose(out) + H(+)(out)</text>
        <dbReference type="Rhea" id="RHEA:29947"/>
        <dbReference type="ChEBI" id="CHEBI:15378"/>
        <dbReference type="ChEBI" id="CHEBI:62346"/>
    </reaction>
    <physiologicalReaction direction="right-to-left" evidence="1">
        <dbReference type="Rhea" id="RHEA:29949"/>
    </physiologicalReaction>
</comment>
<comment type="subcellular location">
    <subcellularLocation>
        <location evidence="1">Cell inner membrane</location>
        <topology evidence="1">Multi-pass membrane protein</topology>
    </subcellularLocation>
</comment>
<comment type="similarity">
    <text evidence="1">Belongs to the L-rhamnose transporter (TC 2.A.7.6) family.</text>
</comment>
<protein>
    <recommendedName>
        <fullName evidence="1">L-rhamnose-proton symporter</fullName>
    </recommendedName>
    <alternativeName>
        <fullName evidence="1">L-rhamnose-H(+) transport protein</fullName>
    </alternativeName>
</protein>
<name>RHAT_CROS8</name>
<dbReference type="EMBL" id="CP000783">
    <property type="protein sequence ID" value="ABU79030.1"/>
    <property type="molecule type" value="Genomic_DNA"/>
</dbReference>
<dbReference type="RefSeq" id="WP_012126092.1">
    <property type="nucleotide sequence ID" value="NC_009778.1"/>
</dbReference>
<dbReference type="KEGG" id="esa:ESA_03844"/>
<dbReference type="PATRIC" id="fig|290339.8.peg.3416"/>
<dbReference type="HOGENOM" id="CLU_066437_0_0_6"/>
<dbReference type="Proteomes" id="UP000000260">
    <property type="component" value="Chromosome"/>
</dbReference>
<dbReference type="GO" id="GO:0005886">
    <property type="term" value="C:plasma membrane"/>
    <property type="evidence" value="ECO:0007669"/>
    <property type="project" value="UniProtKB-SubCell"/>
</dbReference>
<dbReference type="GO" id="GO:0015153">
    <property type="term" value="F:rhamnose transmembrane transporter activity"/>
    <property type="evidence" value="ECO:0007669"/>
    <property type="project" value="UniProtKB-UniRule"/>
</dbReference>
<dbReference type="GO" id="GO:0015293">
    <property type="term" value="F:symporter activity"/>
    <property type="evidence" value="ECO:0007669"/>
    <property type="project" value="UniProtKB-KW"/>
</dbReference>
<dbReference type="HAMAP" id="MF_01532">
    <property type="entry name" value="RhaT"/>
    <property type="match status" value="1"/>
</dbReference>
<dbReference type="InterPro" id="IPR004673">
    <property type="entry name" value="L-rhamnose-proton_sym_RhaT"/>
</dbReference>
<dbReference type="NCBIfam" id="NF010021">
    <property type="entry name" value="PRK13499.1-1"/>
    <property type="match status" value="1"/>
</dbReference>
<dbReference type="NCBIfam" id="NF010023">
    <property type="entry name" value="PRK13499.1-3"/>
    <property type="match status" value="1"/>
</dbReference>
<dbReference type="NCBIfam" id="TIGR00776">
    <property type="entry name" value="RhaT"/>
    <property type="match status" value="1"/>
</dbReference>
<dbReference type="Pfam" id="PF06379">
    <property type="entry name" value="RhaT"/>
    <property type="match status" value="1"/>
</dbReference>